<protein>
    <recommendedName>
        <fullName evidence="1">Phosphate acyltransferase</fullName>
        <ecNumber evidence="1">2.3.1.274</ecNumber>
    </recommendedName>
    <alternativeName>
        <fullName evidence="1">Acyl-ACP phosphotransacylase</fullName>
    </alternativeName>
    <alternativeName>
        <fullName evidence="1">Acyl-[acyl-carrier-protein]--phosphate acyltransferase</fullName>
    </alternativeName>
    <alternativeName>
        <fullName evidence="1">Phosphate-acyl-ACP acyltransferase</fullName>
    </alternativeName>
</protein>
<gene>
    <name evidence="1" type="primary">plsX</name>
    <name type="ordered locus">SPCG_0039</name>
</gene>
<sequence>MKKIAVDAMGGDYAPQAIVEGVNQALSDFSDIEVQLYGDEAKIKQYLTATERVSIIHTDEKIDSDDEPTRAIRNKKNASMVLAAKAVKDGEADAVLSAGNTGALLAAGFFIVGRIKNIDRPGLMSTLPTVDGKGFDMLDLGANAENTAQHLHQYAVLGSFYAKNVRGIAQPRVGLLNNGTESSKGDPLRKETYELLAADESLNFIGNVEARDLMNGVADVVVADGFTGNAVLKSIEGTAMGIMGLLKTAITGGGLRAKLGALLLKDSLRGLKKQLNYSDVGGAVLFGVKAPVVKTHGSSDAKAVYSTIRQIRTMLETDVVAQTAREFSGE</sequence>
<dbReference type="EC" id="2.3.1.274" evidence="1"/>
<dbReference type="EMBL" id="CP001033">
    <property type="protein sequence ID" value="ACB89291.1"/>
    <property type="molecule type" value="Genomic_DNA"/>
</dbReference>
<dbReference type="RefSeq" id="WP_000717456.1">
    <property type="nucleotide sequence ID" value="NC_010582.1"/>
</dbReference>
<dbReference type="SMR" id="B2IR27"/>
<dbReference type="KEGG" id="spw:SPCG_0039"/>
<dbReference type="HOGENOM" id="CLU_039379_1_1_9"/>
<dbReference type="UniPathway" id="UPA00085"/>
<dbReference type="GO" id="GO:0005737">
    <property type="term" value="C:cytoplasm"/>
    <property type="evidence" value="ECO:0007669"/>
    <property type="project" value="UniProtKB-SubCell"/>
</dbReference>
<dbReference type="GO" id="GO:0043811">
    <property type="term" value="F:phosphate:acyl-[acyl carrier protein] acyltransferase activity"/>
    <property type="evidence" value="ECO:0007669"/>
    <property type="project" value="UniProtKB-UniRule"/>
</dbReference>
<dbReference type="GO" id="GO:0006633">
    <property type="term" value="P:fatty acid biosynthetic process"/>
    <property type="evidence" value="ECO:0007669"/>
    <property type="project" value="UniProtKB-UniRule"/>
</dbReference>
<dbReference type="GO" id="GO:0008654">
    <property type="term" value="P:phospholipid biosynthetic process"/>
    <property type="evidence" value="ECO:0007669"/>
    <property type="project" value="UniProtKB-KW"/>
</dbReference>
<dbReference type="Gene3D" id="3.40.718.10">
    <property type="entry name" value="Isopropylmalate Dehydrogenase"/>
    <property type="match status" value="1"/>
</dbReference>
<dbReference type="HAMAP" id="MF_00019">
    <property type="entry name" value="PlsX"/>
    <property type="match status" value="1"/>
</dbReference>
<dbReference type="InterPro" id="IPR003664">
    <property type="entry name" value="FA_synthesis"/>
</dbReference>
<dbReference type="InterPro" id="IPR012281">
    <property type="entry name" value="Phospholipid_synth_PlsX-like"/>
</dbReference>
<dbReference type="NCBIfam" id="TIGR00182">
    <property type="entry name" value="plsX"/>
    <property type="match status" value="1"/>
</dbReference>
<dbReference type="PANTHER" id="PTHR30100">
    <property type="entry name" value="FATTY ACID/PHOSPHOLIPID SYNTHESIS PROTEIN PLSX"/>
    <property type="match status" value="1"/>
</dbReference>
<dbReference type="PANTHER" id="PTHR30100:SF1">
    <property type="entry name" value="PHOSPHATE ACYLTRANSFERASE"/>
    <property type="match status" value="1"/>
</dbReference>
<dbReference type="Pfam" id="PF02504">
    <property type="entry name" value="FA_synthesis"/>
    <property type="match status" value="1"/>
</dbReference>
<dbReference type="PIRSF" id="PIRSF002465">
    <property type="entry name" value="Phsphlp_syn_PlsX"/>
    <property type="match status" value="1"/>
</dbReference>
<dbReference type="SUPFAM" id="SSF53659">
    <property type="entry name" value="Isocitrate/Isopropylmalate dehydrogenase-like"/>
    <property type="match status" value="1"/>
</dbReference>
<proteinExistence type="inferred from homology"/>
<feature type="chain" id="PRO_1000089943" description="Phosphate acyltransferase">
    <location>
        <begin position="1"/>
        <end position="330"/>
    </location>
</feature>
<evidence type="ECO:0000255" key="1">
    <source>
        <dbReference type="HAMAP-Rule" id="MF_00019"/>
    </source>
</evidence>
<organism>
    <name type="scientific">Streptococcus pneumoniae (strain CGSP14)</name>
    <dbReference type="NCBI Taxonomy" id="516950"/>
    <lineage>
        <taxon>Bacteria</taxon>
        <taxon>Bacillati</taxon>
        <taxon>Bacillota</taxon>
        <taxon>Bacilli</taxon>
        <taxon>Lactobacillales</taxon>
        <taxon>Streptococcaceae</taxon>
        <taxon>Streptococcus</taxon>
    </lineage>
</organism>
<comment type="function">
    <text evidence="1">Catalyzes the reversible formation of acyl-phosphate (acyl-PO(4)) from acyl-[acyl-carrier-protein] (acyl-ACP). This enzyme utilizes acyl-ACP as fatty acyl donor, but not acyl-CoA.</text>
</comment>
<comment type="catalytic activity">
    <reaction evidence="1">
        <text>a fatty acyl-[ACP] + phosphate = an acyl phosphate + holo-[ACP]</text>
        <dbReference type="Rhea" id="RHEA:42292"/>
        <dbReference type="Rhea" id="RHEA-COMP:9685"/>
        <dbReference type="Rhea" id="RHEA-COMP:14125"/>
        <dbReference type="ChEBI" id="CHEBI:43474"/>
        <dbReference type="ChEBI" id="CHEBI:59918"/>
        <dbReference type="ChEBI" id="CHEBI:64479"/>
        <dbReference type="ChEBI" id="CHEBI:138651"/>
        <dbReference type="EC" id="2.3.1.274"/>
    </reaction>
</comment>
<comment type="pathway">
    <text evidence="1">Lipid metabolism; phospholipid metabolism.</text>
</comment>
<comment type="subunit">
    <text evidence="1">Homodimer. Probably interacts with PlsY.</text>
</comment>
<comment type="subcellular location">
    <subcellularLocation>
        <location evidence="1">Cytoplasm</location>
    </subcellularLocation>
    <text evidence="1">Associated with the membrane possibly through PlsY.</text>
</comment>
<comment type="similarity">
    <text evidence="1">Belongs to the PlsX family.</text>
</comment>
<keyword id="KW-0963">Cytoplasm</keyword>
<keyword id="KW-0444">Lipid biosynthesis</keyword>
<keyword id="KW-0443">Lipid metabolism</keyword>
<keyword id="KW-0594">Phospholipid biosynthesis</keyword>
<keyword id="KW-1208">Phospholipid metabolism</keyword>
<keyword id="KW-0808">Transferase</keyword>
<name>PLSX_STRPS</name>
<reference key="1">
    <citation type="journal article" date="2009" name="BMC Genomics">
        <title>Genome evolution driven by host adaptations results in a more virulent and antimicrobial-resistant Streptococcus pneumoniae serotype 14.</title>
        <authorList>
            <person name="Ding F."/>
            <person name="Tang P."/>
            <person name="Hsu M.-H."/>
            <person name="Cui P."/>
            <person name="Hu S."/>
            <person name="Yu J."/>
            <person name="Chiu C.-H."/>
        </authorList>
    </citation>
    <scope>NUCLEOTIDE SEQUENCE [LARGE SCALE GENOMIC DNA]</scope>
    <source>
        <strain>CGSP14</strain>
    </source>
</reference>
<accession>B2IR27</accession>